<proteinExistence type="evidence at transcript level"/>
<accession>Q5RD58</accession>
<name>FERY3_PONAB</name>
<keyword id="KW-0963">Cytoplasm</keyword>
<keyword id="KW-0967">Endosome</keyword>
<keyword id="KW-1185">Reference proteome</keyword>
<gene>
    <name evidence="2" type="primary">FERRY3</name>
</gene>
<comment type="function">
    <text evidence="1 2">Component of the FERRY complex (Five-subunit Endosomal Rab5 and RNA/ribosome intermediary). The FERRY complex directly interacts with mRNAs and RAB5A, and functions as a RAB5A effector involved in the localization and the distribution of specific mRNAs most likely by mediating their endosomal transport. The complex recruits mRNAs and ribosomes to early endosomes through direct mRNA-interaction (By similarity). Plays a role in mast cell degranulation (By similarity).</text>
</comment>
<comment type="subunit">
    <text evidence="2">Component of the FERRY complex composed of five subunits, TBCK, PPP1R21, FERRY3, CRYZL1 and GATD1 with a ratio of 1:2:1:2:4, respectively.</text>
</comment>
<comment type="subcellular location">
    <subcellularLocation>
        <location evidence="1">Cytoplasm</location>
    </subcellularLocation>
    <subcellularLocation>
        <location evidence="2">Early endosome</location>
    </subcellularLocation>
</comment>
<reference key="1">
    <citation type="submission" date="2004-11" db="EMBL/GenBank/DDBJ databases">
        <authorList>
            <consortium name="The German cDNA consortium"/>
        </authorList>
    </citation>
    <scope>NUCLEOTIDE SEQUENCE [LARGE SCALE MRNA]</scope>
    <source>
        <tissue>Brain cortex</tissue>
    </source>
</reference>
<feature type="chain" id="PRO_0000089844" description="FERRY endosomal RAB5 effector complex subunit 3">
    <location>
        <begin position="1"/>
        <end position="552"/>
    </location>
</feature>
<feature type="region of interest" description="Disordered" evidence="3">
    <location>
        <begin position="383"/>
        <end position="403"/>
    </location>
</feature>
<sequence>MKKNRERFCNREREFVYKFKVGSQCLELRVPLRFPVQENASHLHGRLMLLHSLPCFIEKDLKEALTQFIEEESLSDYDRDAEASLEAVKSGEVDLHQLASTWAKAYAETTLEHARPEEPSWDEDFADVYHDLIHSPASETLLNLEHNYFVSISELIGERDVELKKLRERQGIEMEKVMQELGKSLTDQDVNSLAAQHFESQQDLENKWSNELKQSTAIQKQEYQEWVIKLHQDLKNPNNSSLSEEIKVQPSQFRESVEAIGRIYEEQRKLEESFTIHLGAQLKTMHNLRLLRADMLDFCKHKRNHRSGVKLHRLQTALSLYSTSLCGLVLLVDNRINSYSGIKRDFATVCQECTDFHFPRIEEQLEVVQQVVLYARTQRRSKLKESLDSGNQNGGNDDKTKNAERNYLNVLPGEFYITRHSNLSEIHVAFHLCVDDHVKSGNITARDPAIMGLRNILKVCCTHDITTISIPLLLVHDMSEEMTIPWCLRRAELVFKCVKGFMMEMASWDGGISRTVQFLVPQSISEEMFYQLSNMLPQIFRVSSTLTLTSKH</sequence>
<dbReference type="EMBL" id="CR858060">
    <property type="protein sequence ID" value="CAH90299.1"/>
    <property type="molecule type" value="mRNA"/>
</dbReference>
<dbReference type="RefSeq" id="NP_001125138.1">
    <property type="nucleotide sequence ID" value="NM_001131666.1"/>
</dbReference>
<dbReference type="RefSeq" id="XP_009245610.1">
    <property type="nucleotide sequence ID" value="XM_009247335.1"/>
</dbReference>
<dbReference type="RefSeq" id="XP_054382293.1">
    <property type="nucleotide sequence ID" value="XM_054526318.2"/>
</dbReference>
<dbReference type="SMR" id="Q5RD58"/>
<dbReference type="FunCoup" id="Q5RD58">
    <property type="interactions" value="2783"/>
</dbReference>
<dbReference type="STRING" id="9601.ENSPPYP00000004748"/>
<dbReference type="Ensembl" id="ENSPPYT00000004936.2">
    <property type="protein sequence ID" value="ENSPPYP00000004748.1"/>
    <property type="gene ID" value="ENSPPYG00000004167.2"/>
</dbReference>
<dbReference type="GeneID" id="100172023"/>
<dbReference type="KEGG" id="pon:100172023"/>
<dbReference type="CTD" id="57102"/>
<dbReference type="eggNOG" id="KOG4506">
    <property type="taxonomic scope" value="Eukaryota"/>
</dbReference>
<dbReference type="GeneTree" id="ENSGT00390000010229"/>
<dbReference type="HOGENOM" id="CLU_036084_0_0_1"/>
<dbReference type="InParanoid" id="Q5RD58"/>
<dbReference type="OMA" id="CKHKRSH"/>
<dbReference type="OrthoDB" id="415359at2759"/>
<dbReference type="TreeFam" id="TF314243"/>
<dbReference type="Proteomes" id="UP000001595">
    <property type="component" value="Chromosome 12"/>
</dbReference>
<dbReference type="GO" id="GO:0005737">
    <property type="term" value="C:cytoplasm"/>
    <property type="evidence" value="ECO:0000250"/>
    <property type="project" value="UniProtKB"/>
</dbReference>
<dbReference type="GO" id="GO:0005769">
    <property type="term" value="C:early endosome"/>
    <property type="evidence" value="ECO:0000250"/>
    <property type="project" value="UniProtKB"/>
</dbReference>
<dbReference type="GO" id="GO:0032991">
    <property type="term" value="C:protein-containing complex"/>
    <property type="evidence" value="ECO:0007669"/>
    <property type="project" value="Ensembl"/>
</dbReference>
<dbReference type="GO" id="GO:0043304">
    <property type="term" value="P:regulation of mast cell degranulation"/>
    <property type="evidence" value="ECO:0000250"/>
    <property type="project" value="UniProtKB"/>
</dbReference>
<dbReference type="InterPro" id="IPR019311">
    <property type="entry name" value="Fy-3"/>
</dbReference>
<dbReference type="PANTHER" id="PTHR16525">
    <property type="entry name" value="PROTEIN C12ORF4"/>
    <property type="match status" value="1"/>
</dbReference>
<dbReference type="PANTHER" id="PTHR16525:SF0">
    <property type="entry name" value="PROTEIN C12ORF4"/>
    <property type="match status" value="1"/>
</dbReference>
<dbReference type="Pfam" id="PF10154">
    <property type="entry name" value="Fy-3"/>
    <property type="match status" value="1"/>
</dbReference>
<protein>
    <recommendedName>
        <fullName evidence="2">FERRY endosomal RAB5 effector complex subunit 3</fullName>
    </recommendedName>
</protein>
<organism>
    <name type="scientific">Pongo abelii</name>
    <name type="common">Sumatran orangutan</name>
    <name type="synonym">Pongo pygmaeus abelii</name>
    <dbReference type="NCBI Taxonomy" id="9601"/>
    <lineage>
        <taxon>Eukaryota</taxon>
        <taxon>Metazoa</taxon>
        <taxon>Chordata</taxon>
        <taxon>Craniata</taxon>
        <taxon>Vertebrata</taxon>
        <taxon>Euteleostomi</taxon>
        <taxon>Mammalia</taxon>
        <taxon>Eutheria</taxon>
        <taxon>Euarchontoglires</taxon>
        <taxon>Primates</taxon>
        <taxon>Haplorrhini</taxon>
        <taxon>Catarrhini</taxon>
        <taxon>Hominidae</taxon>
        <taxon>Pongo</taxon>
    </lineage>
</organism>
<evidence type="ECO:0000250" key="1">
    <source>
        <dbReference type="UniProtKB" id="D4A770"/>
    </source>
</evidence>
<evidence type="ECO:0000250" key="2">
    <source>
        <dbReference type="UniProtKB" id="Q9NQ89"/>
    </source>
</evidence>
<evidence type="ECO:0000256" key="3">
    <source>
        <dbReference type="SAM" id="MobiDB-lite"/>
    </source>
</evidence>